<feature type="chain" id="PRO_1000197224" description="Glycine--tRNA ligase beta subunit">
    <location>
        <begin position="1"/>
        <end position="670"/>
    </location>
</feature>
<dbReference type="EC" id="6.1.1.14" evidence="1"/>
<dbReference type="EMBL" id="CP000916">
    <property type="protein sequence ID" value="ACM22644.1"/>
    <property type="molecule type" value="Genomic_DNA"/>
</dbReference>
<dbReference type="RefSeq" id="WP_015918963.1">
    <property type="nucleotide sequence ID" value="NC_011978.1"/>
</dbReference>
<dbReference type="SMR" id="B9K6R1"/>
<dbReference type="STRING" id="309803.CTN_0468"/>
<dbReference type="KEGG" id="tna:CTN_0468"/>
<dbReference type="eggNOG" id="COG0751">
    <property type="taxonomic scope" value="Bacteria"/>
</dbReference>
<dbReference type="HOGENOM" id="CLU_007220_2_2_0"/>
<dbReference type="Proteomes" id="UP000000445">
    <property type="component" value="Chromosome"/>
</dbReference>
<dbReference type="GO" id="GO:0005829">
    <property type="term" value="C:cytosol"/>
    <property type="evidence" value="ECO:0007669"/>
    <property type="project" value="TreeGrafter"/>
</dbReference>
<dbReference type="GO" id="GO:0004814">
    <property type="term" value="F:arginine-tRNA ligase activity"/>
    <property type="evidence" value="ECO:0007669"/>
    <property type="project" value="InterPro"/>
</dbReference>
<dbReference type="GO" id="GO:0005524">
    <property type="term" value="F:ATP binding"/>
    <property type="evidence" value="ECO:0007669"/>
    <property type="project" value="UniProtKB-UniRule"/>
</dbReference>
<dbReference type="GO" id="GO:0004820">
    <property type="term" value="F:glycine-tRNA ligase activity"/>
    <property type="evidence" value="ECO:0007669"/>
    <property type="project" value="UniProtKB-UniRule"/>
</dbReference>
<dbReference type="GO" id="GO:0006420">
    <property type="term" value="P:arginyl-tRNA aminoacylation"/>
    <property type="evidence" value="ECO:0007669"/>
    <property type="project" value="InterPro"/>
</dbReference>
<dbReference type="GO" id="GO:0006426">
    <property type="term" value="P:glycyl-tRNA aminoacylation"/>
    <property type="evidence" value="ECO:0007669"/>
    <property type="project" value="UniProtKB-UniRule"/>
</dbReference>
<dbReference type="Gene3D" id="1.10.730.10">
    <property type="entry name" value="Isoleucyl-tRNA Synthetase, Domain 1"/>
    <property type="match status" value="1"/>
</dbReference>
<dbReference type="HAMAP" id="MF_00255">
    <property type="entry name" value="Gly_tRNA_synth_beta"/>
    <property type="match status" value="1"/>
</dbReference>
<dbReference type="InterPro" id="IPR008909">
    <property type="entry name" value="DALR_anticod-bd"/>
</dbReference>
<dbReference type="InterPro" id="IPR015944">
    <property type="entry name" value="Gly-tRNA-synth_bsu"/>
</dbReference>
<dbReference type="InterPro" id="IPR006194">
    <property type="entry name" value="Gly-tRNA-synth_heterodimer"/>
</dbReference>
<dbReference type="InterPro" id="IPR009080">
    <property type="entry name" value="tRNAsynth_Ia_anticodon-bd"/>
</dbReference>
<dbReference type="NCBIfam" id="TIGR00211">
    <property type="entry name" value="glyS"/>
    <property type="match status" value="1"/>
</dbReference>
<dbReference type="PANTHER" id="PTHR30075:SF2">
    <property type="entry name" value="GLYCINE--TRNA LIGASE, CHLOROPLASTIC_MITOCHONDRIAL 2"/>
    <property type="match status" value="1"/>
</dbReference>
<dbReference type="PANTHER" id="PTHR30075">
    <property type="entry name" value="GLYCYL-TRNA SYNTHETASE"/>
    <property type="match status" value="1"/>
</dbReference>
<dbReference type="Pfam" id="PF05746">
    <property type="entry name" value="DALR_1"/>
    <property type="match status" value="1"/>
</dbReference>
<dbReference type="Pfam" id="PF02092">
    <property type="entry name" value="tRNA_synt_2f"/>
    <property type="match status" value="1"/>
</dbReference>
<dbReference type="PRINTS" id="PR01045">
    <property type="entry name" value="TRNASYNTHGB"/>
</dbReference>
<dbReference type="SUPFAM" id="SSF47323">
    <property type="entry name" value="Anticodon-binding domain of a subclass of class I aminoacyl-tRNA synthetases"/>
    <property type="match status" value="1"/>
</dbReference>
<dbReference type="SUPFAM" id="SSF109604">
    <property type="entry name" value="HD-domain/PDEase-like"/>
    <property type="match status" value="1"/>
</dbReference>
<dbReference type="PROSITE" id="PS50861">
    <property type="entry name" value="AA_TRNA_LIGASE_II_GLYAB"/>
    <property type="match status" value="1"/>
</dbReference>
<reference key="1">
    <citation type="submission" date="2007-11" db="EMBL/GenBank/DDBJ databases">
        <title>The genome sequence of the hyperthermophilic bacterium Thermotoga neapolitana.</title>
        <authorList>
            <person name="Lim S.K."/>
            <person name="Kim J.S."/>
            <person name="Cha S.H."/>
            <person name="Park B.C."/>
            <person name="Lee D.S."/>
            <person name="Tae H.S."/>
            <person name="Kim S.-J."/>
            <person name="Kim J.J."/>
            <person name="Park K.J."/>
            <person name="Lee S.Y."/>
        </authorList>
    </citation>
    <scope>NUCLEOTIDE SEQUENCE [LARGE SCALE GENOMIC DNA]</scope>
    <source>
        <strain>ATCC 49049 / DSM 4359 / NBRC 107923 / NS-E</strain>
    </source>
</reference>
<evidence type="ECO:0000255" key="1">
    <source>
        <dbReference type="HAMAP-Rule" id="MF_00255"/>
    </source>
</evidence>
<organism>
    <name type="scientific">Thermotoga neapolitana (strain ATCC 49049 / DSM 4359 / NBRC 107923 / NS-E)</name>
    <dbReference type="NCBI Taxonomy" id="309803"/>
    <lineage>
        <taxon>Bacteria</taxon>
        <taxon>Thermotogati</taxon>
        <taxon>Thermotogota</taxon>
        <taxon>Thermotogae</taxon>
        <taxon>Thermotogales</taxon>
        <taxon>Thermotogaceae</taxon>
        <taxon>Thermotoga</taxon>
    </lineage>
</organism>
<gene>
    <name evidence="1" type="primary">glyS</name>
    <name type="ordered locus">CTN_0468</name>
</gene>
<keyword id="KW-0030">Aminoacyl-tRNA synthetase</keyword>
<keyword id="KW-0067">ATP-binding</keyword>
<keyword id="KW-0963">Cytoplasm</keyword>
<keyword id="KW-0436">Ligase</keyword>
<keyword id="KW-0547">Nucleotide-binding</keyword>
<keyword id="KW-0648">Protein biosynthesis</keyword>
<comment type="catalytic activity">
    <reaction evidence="1">
        <text>tRNA(Gly) + glycine + ATP = glycyl-tRNA(Gly) + AMP + diphosphate</text>
        <dbReference type="Rhea" id="RHEA:16013"/>
        <dbReference type="Rhea" id="RHEA-COMP:9664"/>
        <dbReference type="Rhea" id="RHEA-COMP:9683"/>
        <dbReference type="ChEBI" id="CHEBI:30616"/>
        <dbReference type="ChEBI" id="CHEBI:33019"/>
        <dbReference type="ChEBI" id="CHEBI:57305"/>
        <dbReference type="ChEBI" id="CHEBI:78442"/>
        <dbReference type="ChEBI" id="CHEBI:78522"/>
        <dbReference type="ChEBI" id="CHEBI:456215"/>
        <dbReference type="EC" id="6.1.1.14"/>
    </reaction>
</comment>
<comment type="subunit">
    <text evidence="1">Tetramer of two alpha and two beta subunits.</text>
</comment>
<comment type="subcellular location">
    <subcellularLocation>
        <location evidence="1">Cytoplasm</location>
    </subcellularLocation>
</comment>
<comment type="similarity">
    <text evidence="1">Belongs to the class-II aminoacyl-tRNA synthetase family.</text>
</comment>
<protein>
    <recommendedName>
        <fullName evidence="1">Glycine--tRNA ligase beta subunit</fullName>
        <ecNumber evidence="1">6.1.1.14</ecNumber>
    </recommendedName>
    <alternativeName>
        <fullName evidence="1">Glycyl-tRNA synthetase beta subunit</fullName>
        <shortName evidence="1">GlyRS</shortName>
    </alternativeName>
</protein>
<proteinExistence type="inferred from homology"/>
<sequence>MRTALLEVGLEELPASEFYNILEQLETRTRELLKANRIQCDSIEVFVGSRRFGVLLRGLPEKQEGFVEEKKGPPLNVAYDSKGAPTRALEGFLRKNNATFEDIIEKDGYVYISRKIEGKAVEEVLPEVFEDLVMGMSFKKPMRWGTGEYEYVRPVHWIVAMLDDRVLNLTLFGLRASHVSYGKRYHSGALKINTPEEYYEVLKSGYVMASHEERKKSVLKQLEDFERTYGMKVERDEALIAEIVAMTEYPRILVGQFDQKYLELPEEIIVTAVKHHQRAFVAHKDGLTNFFVAFQDGPQSSENVVKGYERVINARLEDARYYFHKDLEMSLGEMNERLKGIVFQERLGTLYDKVERIVKISRKICGELKFPEDFTEKVLKVASLCKADIASKVVYEFPELQGVMGRIYALKEGMDEELAFAIEDHYSENPETVIGSVLGMADRLDTIVGNFAIGNIPTSSKDPYGLKGKADTVFRIVRKNEWDVSLEELLNFAASLVGFHLSNDLEEFFSSRFYQFLINEIGVSYDVARAVNHLWKKPLRGTLAAEALQNISERPEFQDLFVGFERVHNITKKHDSREFDGALFEKEEEKRLMNKFFEVKEKVLKALERLNYEEALQYLIELKPYIDEYFDNVFVMVNRDDLRMNRLGFLKNIDDLFMMIGDMSHLVKRT</sequence>
<name>SYGB_THENN</name>
<accession>B9K6R1</accession>